<sequence length="480" mass="50654">MTRFIDRVVIHARAGNGGNGCASVHREKFKPLGGPDGGNGGRGGSVVFVVDPQVHTLLDFHFHPHVVAPSGKQGAGSNRDGAAGTDLEVKVPDGTVVLDEHGQILADLVGEGTRFEAAAGGRGGLGNAALASRARKAPGFALLGEKGESRDLTLELKTVADVGLVGFPSAGKSSLVSTISAAKPKIADYPFTTLAPNLGVVSAGEHTYTVADVPGLIPGASQGRGLGLDFLRHIERCAVLVHVIDCATLEPGRDPISDIEALEAELAAYTPTLQGDSTLGDLAERPRAVVLNKIDVPEARELADFVREEIEAKFGWPVFEISTVAREGLRQLTFALWDMVAAYRAAQPAAVSRRPVIRPIPVDETAFSVVPDGQGGFIVKGTRPQRWVAQTNFDNDEAVGYLGDRLARLGVEDALLKLGARPGCAVTIGDMTFDWEPQTPAGVDVPLTGRGTDVRLEQTDRVGADERKAARKARRQSGDE</sequence>
<feature type="chain" id="PRO_0000386065" description="GTPase Obg">
    <location>
        <begin position="1"/>
        <end position="480"/>
    </location>
</feature>
<feature type="domain" description="Obg" evidence="3">
    <location>
        <begin position="2"/>
        <end position="159"/>
    </location>
</feature>
<feature type="domain" description="OBG-type G" evidence="1">
    <location>
        <begin position="160"/>
        <end position="341"/>
    </location>
</feature>
<feature type="domain" description="OCT" evidence="2">
    <location>
        <begin position="359"/>
        <end position="437"/>
    </location>
</feature>
<feature type="region of interest" description="Disordered" evidence="4">
    <location>
        <begin position="441"/>
        <end position="480"/>
    </location>
</feature>
<feature type="compositionally biased region" description="Basic and acidic residues" evidence="4">
    <location>
        <begin position="452"/>
        <end position="468"/>
    </location>
</feature>
<feature type="compositionally biased region" description="Basic residues" evidence="4">
    <location>
        <begin position="469"/>
        <end position="480"/>
    </location>
</feature>
<feature type="binding site" evidence="1">
    <location>
        <begin position="166"/>
        <end position="173"/>
    </location>
    <ligand>
        <name>GTP</name>
        <dbReference type="ChEBI" id="CHEBI:37565"/>
    </ligand>
</feature>
<feature type="binding site" evidence="1">
    <location>
        <position position="173"/>
    </location>
    <ligand>
        <name>Mg(2+)</name>
        <dbReference type="ChEBI" id="CHEBI:18420"/>
    </ligand>
</feature>
<feature type="binding site" evidence="1">
    <location>
        <begin position="191"/>
        <end position="195"/>
    </location>
    <ligand>
        <name>GTP</name>
        <dbReference type="ChEBI" id="CHEBI:37565"/>
    </ligand>
</feature>
<feature type="binding site" evidence="1">
    <location>
        <position position="193"/>
    </location>
    <ligand>
        <name>Mg(2+)</name>
        <dbReference type="ChEBI" id="CHEBI:18420"/>
    </ligand>
</feature>
<feature type="binding site" evidence="1">
    <location>
        <begin position="212"/>
        <end position="215"/>
    </location>
    <ligand>
        <name>GTP</name>
        <dbReference type="ChEBI" id="CHEBI:37565"/>
    </ligand>
</feature>
<feature type="binding site" evidence="1">
    <location>
        <begin position="292"/>
        <end position="295"/>
    </location>
    <ligand>
        <name>GTP</name>
        <dbReference type="ChEBI" id="CHEBI:37565"/>
    </ligand>
</feature>
<feature type="binding site" evidence="1">
    <location>
        <begin position="322"/>
        <end position="324"/>
    </location>
    <ligand>
        <name>GTP</name>
        <dbReference type="ChEBI" id="CHEBI:37565"/>
    </ligand>
</feature>
<proteinExistence type="inferred from homology"/>
<organism>
    <name type="scientific">Mycolicibacterium vanbaalenii (strain DSM 7251 / JCM 13017 / BCRC 16820 / KCTC 9966 / NRRL B-24157 / PYR-1)</name>
    <name type="common">Mycobacterium vanbaalenii</name>
    <dbReference type="NCBI Taxonomy" id="350058"/>
    <lineage>
        <taxon>Bacteria</taxon>
        <taxon>Bacillati</taxon>
        <taxon>Actinomycetota</taxon>
        <taxon>Actinomycetes</taxon>
        <taxon>Mycobacteriales</taxon>
        <taxon>Mycobacteriaceae</taxon>
        <taxon>Mycolicibacterium</taxon>
    </lineage>
</organism>
<comment type="function">
    <text evidence="1">An essential GTPase which binds GTP, GDP and possibly (p)ppGpp with moderate affinity, with high nucleotide exchange rates and a fairly low GTP hydrolysis rate. Plays a role in control of the cell cycle, stress response, ribosome biogenesis and in those bacteria that undergo differentiation, in morphogenesis control.</text>
</comment>
<comment type="cofactor">
    <cofactor evidence="1">
        <name>Mg(2+)</name>
        <dbReference type="ChEBI" id="CHEBI:18420"/>
    </cofactor>
</comment>
<comment type="subunit">
    <text evidence="1">Monomer.</text>
</comment>
<comment type="subcellular location">
    <subcellularLocation>
        <location evidence="1">Cytoplasm</location>
    </subcellularLocation>
</comment>
<comment type="similarity">
    <text evidence="1">Belongs to the TRAFAC class OBG-HflX-like GTPase superfamily. OBG GTPase family.</text>
</comment>
<keyword id="KW-0963">Cytoplasm</keyword>
<keyword id="KW-0342">GTP-binding</keyword>
<keyword id="KW-0378">Hydrolase</keyword>
<keyword id="KW-0460">Magnesium</keyword>
<keyword id="KW-0479">Metal-binding</keyword>
<keyword id="KW-0547">Nucleotide-binding</keyword>
<protein>
    <recommendedName>
        <fullName evidence="1">GTPase Obg</fullName>
        <ecNumber evidence="1">3.6.5.-</ecNumber>
    </recommendedName>
    <alternativeName>
        <fullName evidence="1">GTP-binding protein Obg</fullName>
    </alternativeName>
</protein>
<gene>
    <name evidence="1" type="primary">obg</name>
    <name type="ordered locus">Mvan_3944</name>
</gene>
<dbReference type="EC" id="3.6.5.-" evidence="1"/>
<dbReference type="EMBL" id="CP000511">
    <property type="protein sequence ID" value="ABM14721.1"/>
    <property type="molecule type" value="Genomic_DNA"/>
</dbReference>
<dbReference type="RefSeq" id="WP_011781101.1">
    <property type="nucleotide sequence ID" value="NC_008726.1"/>
</dbReference>
<dbReference type="SMR" id="A1TC21"/>
<dbReference type="STRING" id="350058.Mvan_3944"/>
<dbReference type="KEGG" id="mva:Mvan_3944"/>
<dbReference type="eggNOG" id="COG0536">
    <property type="taxonomic scope" value="Bacteria"/>
</dbReference>
<dbReference type="HOGENOM" id="CLU_011747_0_1_11"/>
<dbReference type="Proteomes" id="UP000009159">
    <property type="component" value="Chromosome"/>
</dbReference>
<dbReference type="GO" id="GO:0005737">
    <property type="term" value="C:cytoplasm"/>
    <property type="evidence" value="ECO:0007669"/>
    <property type="project" value="UniProtKB-SubCell"/>
</dbReference>
<dbReference type="GO" id="GO:0005525">
    <property type="term" value="F:GTP binding"/>
    <property type="evidence" value="ECO:0007669"/>
    <property type="project" value="UniProtKB-UniRule"/>
</dbReference>
<dbReference type="GO" id="GO:0003924">
    <property type="term" value="F:GTPase activity"/>
    <property type="evidence" value="ECO:0007669"/>
    <property type="project" value="UniProtKB-UniRule"/>
</dbReference>
<dbReference type="GO" id="GO:0000287">
    <property type="term" value="F:magnesium ion binding"/>
    <property type="evidence" value="ECO:0007669"/>
    <property type="project" value="InterPro"/>
</dbReference>
<dbReference type="GO" id="GO:0042254">
    <property type="term" value="P:ribosome biogenesis"/>
    <property type="evidence" value="ECO:0007669"/>
    <property type="project" value="UniProtKB-UniRule"/>
</dbReference>
<dbReference type="CDD" id="cd01898">
    <property type="entry name" value="Obg"/>
    <property type="match status" value="1"/>
</dbReference>
<dbReference type="FunFam" id="2.70.210.12:FF:000001">
    <property type="entry name" value="GTPase Obg"/>
    <property type="match status" value="1"/>
</dbReference>
<dbReference type="Gene3D" id="3.30.300.350">
    <property type="entry name" value="GTP-binding protein OBG, C-terminal domain"/>
    <property type="match status" value="1"/>
</dbReference>
<dbReference type="Gene3D" id="2.70.210.12">
    <property type="entry name" value="GTP1/OBG domain"/>
    <property type="match status" value="1"/>
</dbReference>
<dbReference type="Gene3D" id="3.40.50.300">
    <property type="entry name" value="P-loop containing nucleotide triphosphate hydrolases"/>
    <property type="match status" value="1"/>
</dbReference>
<dbReference type="HAMAP" id="MF_01454">
    <property type="entry name" value="GTPase_Obg"/>
    <property type="match status" value="1"/>
</dbReference>
<dbReference type="InterPro" id="IPR031167">
    <property type="entry name" value="G_OBG"/>
</dbReference>
<dbReference type="InterPro" id="IPR006073">
    <property type="entry name" value="GTP-bd"/>
</dbReference>
<dbReference type="InterPro" id="IPR014100">
    <property type="entry name" value="GTP-bd_Obg/CgtA"/>
</dbReference>
<dbReference type="InterPro" id="IPR036346">
    <property type="entry name" value="GTP-bd_prot_GTP1/OBG_C_sf"/>
</dbReference>
<dbReference type="InterPro" id="IPR006074">
    <property type="entry name" value="GTP1-OBG_CS"/>
</dbReference>
<dbReference type="InterPro" id="IPR006169">
    <property type="entry name" value="GTP1_OBG_dom"/>
</dbReference>
<dbReference type="InterPro" id="IPR036726">
    <property type="entry name" value="GTP1_OBG_dom_sf"/>
</dbReference>
<dbReference type="InterPro" id="IPR045086">
    <property type="entry name" value="OBG_GTPase"/>
</dbReference>
<dbReference type="InterPro" id="IPR015349">
    <property type="entry name" value="OCT_dom"/>
</dbReference>
<dbReference type="InterPro" id="IPR027417">
    <property type="entry name" value="P-loop_NTPase"/>
</dbReference>
<dbReference type="NCBIfam" id="TIGR02729">
    <property type="entry name" value="Obg_CgtA"/>
    <property type="match status" value="1"/>
</dbReference>
<dbReference type="NCBIfam" id="TIGR03595">
    <property type="entry name" value="Obg_CgtA_exten"/>
    <property type="match status" value="1"/>
</dbReference>
<dbReference type="NCBIfam" id="NF008954">
    <property type="entry name" value="PRK12296.1"/>
    <property type="match status" value="1"/>
</dbReference>
<dbReference type="NCBIfam" id="NF008955">
    <property type="entry name" value="PRK12297.1"/>
    <property type="match status" value="1"/>
</dbReference>
<dbReference type="NCBIfam" id="NF008956">
    <property type="entry name" value="PRK12299.1"/>
    <property type="match status" value="1"/>
</dbReference>
<dbReference type="PANTHER" id="PTHR11702">
    <property type="entry name" value="DEVELOPMENTALLY REGULATED GTP-BINDING PROTEIN-RELATED"/>
    <property type="match status" value="1"/>
</dbReference>
<dbReference type="PANTHER" id="PTHR11702:SF31">
    <property type="entry name" value="MITOCHONDRIAL RIBOSOME-ASSOCIATED GTPASE 2"/>
    <property type="match status" value="1"/>
</dbReference>
<dbReference type="Pfam" id="PF09269">
    <property type="entry name" value="DUF1967"/>
    <property type="match status" value="1"/>
</dbReference>
<dbReference type="Pfam" id="PF01018">
    <property type="entry name" value="GTP1_OBG"/>
    <property type="match status" value="1"/>
</dbReference>
<dbReference type="Pfam" id="PF01926">
    <property type="entry name" value="MMR_HSR1"/>
    <property type="match status" value="1"/>
</dbReference>
<dbReference type="PRINTS" id="PR00326">
    <property type="entry name" value="GTP1OBG"/>
</dbReference>
<dbReference type="SUPFAM" id="SSF102741">
    <property type="entry name" value="Obg GTP-binding protein C-terminal domain"/>
    <property type="match status" value="1"/>
</dbReference>
<dbReference type="SUPFAM" id="SSF82051">
    <property type="entry name" value="Obg GTP-binding protein N-terminal domain"/>
    <property type="match status" value="1"/>
</dbReference>
<dbReference type="SUPFAM" id="SSF52540">
    <property type="entry name" value="P-loop containing nucleoside triphosphate hydrolases"/>
    <property type="match status" value="1"/>
</dbReference>
<dbReference type="PROSITE" id="PS51710">
    <property type="entry name" value="G_OBG"/>
    <property type="match status" value="1"/>
</dbReference>
<dbReference type="PROSITE" id="PS00905">
    <property type="entry name" value="GTP1_OBG"/>
    <property type="match status" value="1"/>
</dbReference>
<dbReference type="PROSITE" id="PS51883">
    <property type="entry name" value="OBG"/>
    <property type="match status" value="1"/>
</dbReference>
<dbReference type="PROSITE" id="PS51881">
    <property type="entry name" value="OCT"/>
    <property type="match status" value="1"/>
</dbReference>
<accession>A1TC21</accession>
<name>OBG_MYCVP</name>
<reference key="1">
    <citation type="submission" date="2006-12" db="EMBL/GenBank/DDBJ databases">
        <title>Complete sequence of Mycobacterium vanbaalenii PYR-1.</title>
        <authorList>
            <consortium name="US DOE Joint Genome Institute"/>
            <person name="Copeland A."/>
            <person name="Lucas S."/>
            <person name="Lapidus A."/>
            <person name="Barry K."/>
            <person name="Detter J.C."/>
            <person name="Glavina del Rio T."/>
            <person name="Hammon N."/>
            <person name="Israni S."/>
            <person name="Dalin E."/>
            <person name="Tice H."/>
            <person name="Pitluck S."/>
            <person name="Singan V."/>
            <person name="Schmutz J."/>
            <person name="Larimer F."/>
            <person name="Land M."/>
            <person name="Hauser L."/>
            <person name="Kyrpides N."/>
            <person name="Anderson I.J."/>
            <person name="Miller C."/>
            <person name="Richardson P."/>
        </authorList>
    </citation>
    <scope>NUCLEOTIDE SEQUENCE [LARGE SCALE GENOMIC DNA]</scope>
    <source>
        <strain>DSM 7251 / JCM 13017 / BCRC 16820 / KCTC 9966 / NRRL B-24157 / PYR-1</strain>
    </source>
</reference>
<evidence type="ECO:0000255" key="1">
    <source>
        <dbReference type="HAMAP-Rule" id="MF_01454"/>
    </source>
</evidence>
<evidence type="ECO:0000255" key="2">
    <source>
        <dbReference type="PROSITE-ProRule" id="PRU01229"/>
    </source>
</evidence>
<evidence type="ECO:0000255" key="3">
    <source>
        <dbReference type="PROSITE-ProRule" id="PRU01231"/>
    </source>
</evidence>
<evidence type="ECO:0000256" key="4">
    <source>
        <dbReference type="SAM" id="MobiDB-lite"/>
    </source>
</evidence>